<proteinExistence type="evidence at protein level"/>
<feature type="signal peptide">
    <location>
        <begin position="1"/>
        <end position="23"/>
    </location>
</feature>
<feature type="chain" id="PRO_0000031719" description="D-allose-binding periplasmic protein">
    <location>
        <begin position="24"/>
        <end position="311"/>
    </location>
</feature>
<feature type="sequence conflict" description="In Ref. 4; CAA57686." evidence="2" ref="4">
    <original>M</original>
    <variation>I</variation>
    <location>
        <position position="16"/>
    </location>
</feature>
<feature type="sequence conflict" description="In Ref. 4; CAA57686." evidence="2" ref="4">
    <original>AGGNVE</original>
    <variation>LAQCGS</variation>
    <location>
        <begin position="125"/>
        <end position="130"/>
    </location>
</feature>
<feature type="strand" evidence="4">
    <location>
        <begin position="26"/>
        <end position="32"/>
    </location>
</feature>
<feature type="strand" evidence="4">
    <location>
        <begin position="34"/>
        <end position="36"/>
    </location>
</feature>
<feature type="helix" evidence="4">
    <location>
        <begin position="37"/>
        <end position="53"/>
    </location>
</feature>
<feature type="strand" evidence="4">
    <location>
        <begin position="57"/>
        <end position="61"/>
    </location>
</feature>
<feature type="helix" evidence="4">
    <location>
        <begin position="68"/>
        <end position="79"/>
    </location>
</feature>
<feature type="strand" evidence="4">
    <location>
        <begin position="81"/>
        <end position="88"/>
    </location>
</feature>
<feature type="strand" evidence="4">
    <location>
        <begin position="91"/>
        <end position="94"/>
    </location>
</feature>
<feature type="helix" evidence="4">
    <location>
        <begin position="97"/>
        <end position="105"/>
    </location>
</feature>
<feature type="strand" evidence="4">
    <location>
        <begin position="109"/>
        <end position="115"/>
    </location>
</feature>
<feature type="helix" evidence="4">
    <location>
        <begin position="119"/>
        <end position="124"/>
    </location>
</feature>
<feature type="strand" evidence="4">
    <location>
        <begin position="130"/>
        <end position="134"/>
    </location>
</feature>
<feature type="helix" evidence="4">
    <location>
        <begin position="137"/>
        <end position="152"/>
    </location>
</feature>
<feature type="helix" evidence="4">
    <location>
        <begin position="153"/>
        <end position="155"/>
    </location>
</feature>
<feature type="strand" evidence="4">
    <location>
        <begin position="157"/>
        <end position="163"/>
    </location>
</feature>
<feature type="helix" evidence="4">
    <location>
        <begin position="169"/>
        <end position="183"/>
    </location>
</feature>
<feature type="strand" evidence="4">
    <location>
        <begin position="188"/>
        <end position="195"/>
    </location>
</feature>
<feature type="helix" evidence="4">
    <location>
        <begin position="200"/>
        <end position="213"/>
    </location>
</feature>
<feature type="strand" evidence="4">
    <location>
        <begin position="219"/>
        <end position="224"/>
    </location>
</feature>
<feature type="helix" evidence="4">
    <location>
        <begin position="225"/>
        <end position="237"/>
    </location>
</feature>
<feature type="turn" evidence="4">
    <location>
        <begin position="241"/>
        <end position="243"/>
    </location>
</feature>
<feature type="strand" evidence="4">
    <location>
        <begin position="244"/>
        <end position="250"/>
    </location>
</feature>
<feature type="helix" evidence="4">
    <location>
        <begin position="253"/>
        <end position="260"/>
    </location>
</feature>
<feature type="strand" evidence="4">
    <location>
        <begin position="266"/>
        <end position="269"/>
    </location>
</feature>
<feature type="helix" evidence="4">
    <location>
        <begin position="272"/>
        <end position="288"/>
    </location>
</feature>
<feature type="strand" evidence="3">
    <location>
        <begin position="295"/>
        <end position="297"/>
    </location>
</feature>
<feature type="strand" evidence="4">
    <location>
        <begin position="300"/>
        <end position="303"/>
    </location>
</feature>
<feature type="strand" evidence="4">
    <location>
        <begin position="307"/>
        <end position="309"/>
    </location>
</feature>
<comment type="function">
    <text evidence="1">Part of the binding-protein-dependent transport system AlsBAC for D-allose.</text>
</comment>
<comment type="subcellular location">
    <subcellularLocation>
        <location>Periplasm</location>
    </subcellularLocation>
</comment>
<comment type="similarity">
    <text evidence="2">Belongs to the bacterial solute-binding protein 2 family.</text>
</comment>
<reference key="1">
    <citation type="journal article" date="1995" name="Nucleic Acids Res.">
        <title>Analysis of the Escherichia coli genome VI: DNA sequence of the region from 92.8 through 100 minutes.</title>
        <authorList>
            <person name="Burland V.D."/>
            <person name="Plunkett G. III"/>
            <person name="Sofia H.J."/>
            <person name="Daniels D.L."/>
            <person name="Blattner F.R."/>
        </authorList>
    </citation>
    <scope>NUCLEOTIDE SEQUENCE [LARGE SCALE GENOMIC DNA]</scope>
    <source>
        <strain>K12 / MG1655 / ATCC 47076</strain>
    </source>
</reference>
<reference key="2">
    <citation type="journal article" date="1997" name="Science">
        <title>The complete genome sequence of Escherichia coli K-12.</title>
        <authorList>
            <person name="Blattner F.R."/>
            <person name="Plunkett G. III"/>
            <person name="Bloch C.A."/>
            <person name="Perna N.T."/>
            <person name="Burland V."/>
            <person name="Riley M."/>
            <person name="Collado-Vides J."/>
            <person name="Glasner J.D."/>
            <person name="Rode C.K."/>
            <person name="Mayhew G.F."/>
            <person name="Gregor J."/>
            <person name="Davis N.W."/>
            <person name="Kirkpatrick H.A."/>
            <person name="Goeden M.A."/>
            <person name="Rose D.J."/>
            <person name="Mau B."/>
            <person name="Shao Y."/>
        </authorList>
    </citation>
    <scope>NUCLEOTIDE SEQUENCE [LARGE SCALE GENOMIC DNA]</scope>
    <source>
        <strain>K12 / MG1655 / ATCC 47076</strain>
    </source>
</reference>
<reference key="3">
    <citation type="journal article" date="2006" name="Mol. Syst. Biol.">
        <title>Highly accurate genome sequences of Escherichia coli K-12 strains MG1655 and W3110.</title>
        <authorList>
            <person name="Hayashi K."/>
            <person name="Morooka N."/>
            <person name="Yamamoto Y."/>
            <person name="Fujita K."/>
            <person name="Isono K."/>
            <person name="Choi S."/>
            <person name="Ohtsubo E."/>
            <person name="Baba T."/>
            <person name="Wanner B.L."/>
            <person name="Mori H."/>
            <person name="Horiuchi T."/>
        </authorList>
    </citation>
    <scope>NUCLEOTIDE SEQUENCE [LARGE SCALE GENOMIC DNA]</scope>
    <source>
        <strain>K12 / W3110 / ATCC 27325 / DSM 5911</strain>
    </source>
</reference>
<reference key="4">
    <citation type="journal article" date="1996" name="J. Bacteriol.">
        <title>Ribose catabolism of Escherichia coli: characterization of the rpiB gene encoding ribose phosphate isomerase B and of the rpiR gene, which is involved in regulation of rpiB expression.</title>
        <authorList>
            <person name="Soerensen K.I."/>
            <person name="Hove-Jensen B."/>
        </authorList>
    </citation>
    <scope>NUCLEOTIDE SEQUENCE [GENOMIC DNA] OF 1-130</scope>
    <source>
        <strain>K12</strain>
    </source>
</reference>
<reference key="5">
    <citation type="journal article" date="1997" name="J. Bacteriol.">
        <title>The D-allose operon of Escherichia coli K-12.</title>
        <authorList>
            <person name="Kim C."/>
            <person name="Song S."/>
            <person name="Park C."/>
        </authorList>
    </citation>
    <scope>FUNCTION</scope>
</reference>
<reference key="6">
    <citation type="journal article" date="1999" name="J. Mol. Biol.">
        <title>Structure of D-allose binding protein from Escherichia coli bound to D-allose at 1.8-A resolution.</title>
        <authorList>
            <person name="Chaudhuri B.N."/>
            <person name="Ko J."/>
            <person name="Park C."/>
            <person name="Jones T.A."/>
            <person name="Mowbray S.L."/>
        </authorList>
    </citation>
    <scope>X-RAY CRYSTALLOGRAPHY (1.8 ANGSTROMS)</scope>
</reference>
<accession>P39265</accession>
<accession>Q2M6L5</accession>
<keyword id="KW-0002">3D-structure</keyword>
<keyword id="KW-0574">Periplasm</keyword>
<keyword id="KW-1185">Reference proteome</keyword>
<keyword id="KW-0732">Signal</keyword>
<keyword id="KW-0762">Sugar transport</keyword>
<keyword id="KW-0813">Transport</keyword>
<dbReference type="EMBL" id="U14003">
    <property type="protein sequence ID" value="AAA96987.1"/>
    <property type="molecule type" value="Genomic_DNA"/>
</dbReference>
<dbReference type="EMBL" id="U00096">
    <property type="protein sequence ID" value="AAC77049.1"/>
    <property type="molecule type" value="Genomic_DNA"/>
</dbReference>
<dbReference type="EMBL" id="AP009048">
    <property type="protein sequence ID" value="BAE78091.1"/>
    <property type="molecule type" value="Genomic_DNA"/>
</dbReference>
<dbReference type="EMBL" id="X82203">
    <property type="protein sequence ID" value="CAA57686.1"/>
    <property type="molecule type" value="Genomic_DNA"/>
</dbReference>
<dbReference type="PIR" id="S56316">
    <property type="entry name" value="S56316"/>
</dbReference>
<dbReference type="RefSeq" id="NP_418512.1">
    <property type="nucleotide sequence ID" value="NC_000913.3"/>
</dbReference>
<dbReference type="RefSeq" id="WP_001046187.1">
    <property type="nucleotide sequence ID" value="NZ_SSZK01000016.1"/>
</dbReference>
<dbReference type="PDB" id="1GUB">
    <property type="method" value="X-ray"/>
    <property type="resolution" value="3.10 A"/>
    <property type="chains" value="A=24-311"/>
</dbReference>
<dbReference type="PDB" id="1GUD">
    <property type="method" value="X-ray"/>
    <property type="resolution" value="1.70 A"/>
    <property type="chains" value="A/B=24-311"/>
</dbReference>
<dbReference type="PDB" id="1RPJ">
    <property type="method" value="X-ray"/>
    <property type="resolution" value="1.80 A"/>
    <property type="chains" value="A=24-311"/>
</dbReference>
<dbReference type="PDBsum" id="1GUB"/>
<dbReference type="PDBsum" id="1GUD"/>
<dbReference type="PDBsum" id="1RPJ"/>
<dbReference type="BMRB" id="P39265"/>
<dbReference type="SMR" id="P39265"/>
<dbReference type="BioGRID" id="4262681">
    <property type="interactions" value="18"/>
</dbReference>
<dbReference type="BioGRID" id="852897">
    <property type="interactions" value="2"/>
</dbReference>
<dbReference type="ComplexPortal" id="CPX-4320">
    <property type="entry name" value="D-allose ABC transporter complex"/>
</dbReference>
<dbReference type="FunCoup" id="P39265">
    <property type="interactions" value="407"/>
</dbReference>
<dbReference type="IntAct" id="P39265">
    <property type="interactions" value="7"/>
</dbReference>
<dbReference type="STRING" id="511145.b4088"/>
<dbReference type="DrugBank" id="DB03989">
    <property type="generic name" value="D-Allopyranose"/>
</dbReference>
<dbReference type="TCDB" id="3.A.1.2.6">
    <property type="family name" value="the atp-binding cassette (abc) superfamily"/>
</dbReference>
<dbReference type="jPOST" id="P39265"/>
<dbReference type="PaxDb" id="511145-b4088"/>
<dbReference type="EnsemblBacteria" id="AAC77049">
    <property type="protein sequence ID" value="AAC77049"/>
    <property type="gene ID" value="b4088"/>
</dbReference>
<dbReference type="GeneID" id="948604"/>
<dbReference type="KEGG" id="ecj:JW4049"/>
<dbReference type="KEGG" id="eco:b4088"/>
<dbReference type="KEGG" id="ecoc:C3026_22100"/>
<dbReference type="PATRIC" id="fig|1411691.4.peg.2612"/>
<dbReference type="EchoBASE" id="EB2352"/>
<dbReference type="eggNOG" id="COG1879">
    <property type="taxonomic scope" value="Bacteria"/>
</dbReference>
<dbReference type="HOGENOM" id="CLU_037628_3_2_6"/>
<dbReference type="InParanoid" id="P39265"/>
<dbReference type="OMA" id="AFYCAND"/>
<dbReference type="OrthoDB" id="9773673at2"/>
<dbReference type="PhylomeDB" id="P39265"/>
<dbReference type="BioCyc" id="EcoCyc:YJCX-MONOMER"/>
<dbReference type="BioCyc" id="MetaCyc:YJCX-MONOMER"/>
<dbReference type="BRENDA" id="7.5.2.8">
    <property type="organism ID" value="2026"/>
</dbReference>
<dbReference type="EvolutionaryTrace" id="P39265"/>
<dbReference type="PRO" id="PR:P39265"/>
<dbReference type="Proteomes" id="UP000000625">
    <property type="component" value="Chromosome"/>
</dbReference>
<dbReference type="GO" id="GO:0055052">
    <property type="term" value="C:ATP-binding cassette (ABC) transporter complex, substrate-binding subunit-containing"/>
    <property type="evidence" value="ECO:0000303"/>
    <property type="project" value="ComplexPortal"/>
</dbReference>
<dbReference type="GO" id="GO:0016020">
    <property type="term" value="C:membrane"/>
    <property type="evidence" value="ECO:0007005"/>
    <property type="project" value="UniProtKB"/>
</dbReference>
<dbReference type="GO" id="GO:0030288">
    <property type="term" value="C:outer membrane-bounded periplasmic space"/>
    <property type="evidence" value="ECO:0000314"/>
    <property type="project" value="EcoCyc"/>
</dbReference>
<dbReference type="GO" id="GO:0048029">
    <property type="term" value="F:monosaccharide binding"/>
    <property type="evidence" value="ECO:0000353"/>
    <property type="project" value="EcoCyc"/>
</dbReference>
<dbReference type="GO" id="GO:0015754">
    <property type="term" value="P:D-allose transmembrane transport"/>
    <property type="evidence" value="ECO:0000269"/>
    <property type="project" value="EcoCyc"/>
</dbReference>
<dbReference type="GO" id="GO:0015752">
    <property type="term" value="P:D-ribose transmembrane transport"/>
    <property type="evidence" value="ECO:0000303"/>
    <property type="project" value="ComplexPortal"/>
</dbReference>
<dbReference type="GO" id="GO:0055085">
    <property type="term" value="P:transmembrane transport"/>
    <property type="evidence" value="ECO:0000318"/>
    <property type="project" value="GO_Central"/>
</dbReference>
<dbReference type="CDD" id="cd06320">
    <property type="entry name" value="PBP1_allose_binding"/>
    <property type="match status" value="1"/>
</dbReference>
<dbReference type="FunFam" id="3.40.50.2300:FF:000198">
    <property type="entry name" value="D-allose-binding periplasmic protein (ALBP)"/>
    <property type="match status" value="1"/>
</dbReference>
<dbReference type="Gene3D" id="3.40.50.2300">
    <property type="match status" value="2"/>
</dbReference>
<dbReference type="InterPro" id="IPR028082">
    <property type="entry name" value="Peripla_BP_I"/>
</dbReference>
<dbReference type="InterPro" id="IPR025997">
    <property type="entry name" value="SBP_2_dom"/>
</dbReference>
<dbReference type="NCBIfam" id="NF007254">
    <property type="entry name" value="PRK09701.1"/>
    <property type="match status" value="1"/>
</dbReference>
<dbReference type="PANTHER" id="PTHR46847">
    <property type="entry name" value="D-ALLOSE-BINDING PERIPLASMIC PROTEIN-RELATED"/>
    <property type="match status" value="1"/>
</dbReference>
<dbReference type="PANTHER" id="PTHR46847:SF1">
    <property type="entry name" value="D-ALLOSE-BINDING PERIPLASMIC PROTEIN-RELATED"/>
    <property type="match status" value="1"/>
</dbReference>
<dbReference type="Pfam" id="PF13407">
    <property type="entry name" value="Peripla_BP_4"/>
    <property type="match status" value="1"/>
</dbReference>
<dbReference type="SUPFAM" id="SSF53822">
    <property type="entry name" value="Periplasmic binding protein-like I"/>
    <property type="match status" value="1"/>
</dbReference>
<gene>
    <name type="primary">alsB</name>
    <name type="synonym">yjcX</name>
    <name type="ordered locus">b4088</name>
    <name type="ordered locus">JW4049</name>
</gene>
<evidence type="ECO:0000269" key="1">
    <source>
    </source>
</evidence>
<evidence type="ECO:0000305" key="2"/>
<evidence type="ECO:0007829" key="3">
    <source>
        <dbReference type="PDB" id="1GUB"/>
    </source>
</evidence>
<evidence type="ECO:0007829" key="4">
    <source>
        <dbReference type="PDB" id="1GUD"/>
    </source>
</evidence>
<protein>
    <recommendedName>
        <fullName>D-allose-binding periplasmic protein</fullName>
        <shortName>ALBP</shortName>
    </recommendedName>
</protein>
<name>ALSB_ECOLI</name>
<organism>
    <name type="scientific">Escherichia coli (strain K12)</name>
    <dbReference type="NCBI Taxonomy" id="83333"/>
    <lineage>
        <taxon>Bacteria</taxon>
        <taxon>Pseudomonadati</taxon>
        <taxon>Pseudomonadota</taxon>
        <taxon>Gammaproteobacteria</taxon>
        <taxon>Enterobacterales</taxon>
        <taxon>Enterobacteriaceae</taxon>
        <taxon>Escherichia</taxon>
    </lineage>
</organism>
<sequence length="311" mass="32910">MNKYLKYFSGTLVGLMLSTSAFAAAEYAVVLKTLSNPFWVDMKKGIEDEAKTLGVSVDIFASPSEGDFQSQLQLFEDLSNKNYKGIAFAPLSSVNLVMPVARAWKKGIYLVNLDEKIDMDNLKKAGGNVEAFVTTDNVAVGAKGASFIIDKLGAEGGEVAIIEGKAGNASGEARRNGATEAFKKASQIKLVASQPADWDRIKALDVATNVLQRNPNIKAIYCANDTMAMGVAQAVANAGKTGKVLVVGTDGIPEARKMVEAGQMTATVAQNPADIGATGLKLMVDAEKSGKVIPLDKAPEFKLVDSILVTQ</sequence>